<keyword id="KW-1283">Bacterial microcompartment</keyword>
<keyword id="KW-0846">Cobalamin</keyword>
<keyword id="KW-0170">Cobalt</keyword>
<keyword id="KW-0903">Direct protein sequencing</keyword>
<keyword id="KW-0456">Lyase</keyword>
<keyword id="KW-1185">Reference proteome</keyword>
<name>PDUC_SALTY</name>
<evidence type="ECO:0000250" key="1">
    <source>
        <dbReference type="UniProtKB" id="P0DUM7"/>
    </source>
</evidence>
<evidence type="ECO:0000269" key="2">
    <source>
    </source>
</evidence>
<evidence type="ECO:0000269" key="3">
    <source>
    </source>
</evidence>
<evidence type="ECO:0000269" key="4">
    <source>
    </source>
</evidence>
<evidence type="ECO:0000269" key="5">
    <source>
    </source>
</evidence>
<evidence type="ECO:0000269" key="6">
    <source>
    </source>
</evidence>
<evidence type="ECO:0000269" key="7">
    <source>
    </source>
</evidence>
<evidence type="ECO:0000269" key="8">
    <source>
    </source>
</evidence>
<evidence type="ECO:0000269" key="9">
    <source>
    </source>
</evidence>
<evidence type="ECO:0000269" key="10">
    <source>
    </source>
</evidence>
<evidence type="ECO:0000269" key="11">
    <source>
    </source>
</evidence>
<evidence type="ECO:0000269" key="12">
    <source>
    </source>
</evidence>
<evidence type="ECO:0000303" key="13">
    <source>
    </source>
</evidence>
<evidence type="ECO:0000305" key="14"/>
<evidence type="ECO:0000305" key="15">
    <source>
    </source>
</evidence>
<evidence type="ECO:0000305" key="16">
    <source>
    </source>
</evidence>
<evidence type="ECO:0000305" key="17">
    <source>
    </source>
</evidence>
<dbReference type="EC" id="4.2.1.28" evidence="12"/>
<dbReference type="EMBL" id="AF026270">
    <property type="protein sequence ID" value="AAB84102.1"/>
    <property type="molecule type" value="Genomic_DNA"/>
</dbReference>
<dbReference type="EMBL" id="AE006468">
    <property type="protein sequence ID" value="AAL20944.1"/>
    <property type="molecule type" value="Genomic_DNA"/>
</dbReference>
<dbReference type="RefSeq" id="NP_460985.1">
    <property type="nucleotide sequence ID" value="NC_003197.2"/>
</dbReference>
<dbReference type="RefSeq" id="WP_001256896.1">
    <property type="nucleotide sequence ID" value="NC_003197.2"/>
</dbReference>
<dbReference type="SMR" id="P37450"/>
<dbReference type="STRING" id="99287.STM2040"/>
<dbReference type="PaxDb" id="99287-STM2040"/>
<dbReference type="GeneID" id="1253561"/>
<dbReference type="KEGG" id="stm:STM2040"/>
<dbReference type="PATRIC" id="fig|99287.12.peg.2162"/>
<dbReference type="HOGENOM" id="CLU_022314_1_0_6"/>
<dbReference type="OMA" id="DMLNMQK"/>
<dbReference type="PhylomeDB" id="P37450"/>
<dbReference type="BioCyc" id="MetaCyc:STM2040-MONOMER"/>
<dbReference type="BioCyc" id="SENT99287:STM2040-MONOMER"/>
<dbReference type="UniPathway" id="UPA00621"/>
<dbReference type="CD-CODE" id="92BB331A">
    <property type="entry name" value="Enzyme_shell proteins condensates"/>
</dbReference>
<dbReference type="Proteomes" id="UP000001014">
    <property type="component" value="Chromosome"/>
</dbReference>
<dbReference type="GO" id="GO:0031472">
    <property type="term" value="C:propanediol degradation polyhedral organelle"/>
    <property type="evidence" value="ECO:0000314"/>
    <property type="project" value="UniProtKB"/>
</dbReference>
<dbReference type="GO" id="GO:0031419">
    <property type="term" value="F:cobalamin binding"/>
    <property type="evidence" value="ECO:0007669"/>
    <property type="project" value="UniProtKB-KW"/>
</dbReference>
<dbReference type="GO" id="GO:0050215">
    <property type="term" value="F:propanediol dehydratase activity"/>
    <property type="evidence" value="ECO:0007669"/>
    <property type="project" value="UniProtKB-EC"/>
</dbReference>
<dbReference type="GO" id="GO:0051144">
    <property type="term" value="P:propanediol catabolic process"/>
    <property type="evidence" value="ECO:0007669"/>
    <property type="project" value="UniProtKB-UniPathway"/>
</dbReference>
<dbReference type="CDD" id="cd03687">
    <property type="entry name" value="Dehydratase_LU"/>
    <property type="match status" value="1"/>
</dbReference>
<dbReference type="Gene3D" id="3.20.20.350">
    <property type="entry name" value="Diol/glycerol dehydratase, large subunit"/>
    <property type="match status" value="1"/>
</dbReference>
<dbReference type="InterPro" id="IPR016176">
    <property type="entry name" value="Cbl-dep_enz_cat"/>
</dbReference>
<dbReference type="InterPro" id="IPR036999">
    <property type="entry name" value="Diol/glycerol_deHase_lsu_sf"/>
</dbReference>
<dbReference type="InterPro" id="IPR003206">
    <property type="entry name" value="Diol/glycerol_deHydtase_lsu"/>
</dbReference>
<dbReference type="NCBIfam" id="NF011979">
    <property type="entry name" value="PRK15444.1"/>
    <property type="match status" value="1"/>
</dbReference>
<dbReference type="Pfam" id="PF02286">
    <property type="entry name" value="Dehydratase_LU"/>
    <property type="match status" value="1"/>
</dbReference>
<dbReference type="PIRSF" id="PIRSF018507">
    <property type="entry name" value="Prpndl_dhdrts_lg"/>
    <property type="match status" value="1"/>
</dbReference>
<dbReference type="SUPFAM" id="SSF51703">
    <property type="entry name" value="Cobalamin (vitamin B12)-dependent enzymes"/>
    <property type="match status" value="1"/>
</dbReference>
<organism>
    <name type="scientific">Salmonella typhimurium (strain LT2 / SGSC1412 / ATCC 700720)</name>
    <dbReference type="NCBI Taxonomy" id="99287"/>
    <lineage>
        <taxon>Bacteria</taxon>
        <taxon>Pseudomonadati</taxon>
        <taxon>Pseudomonadota</taxon>
        <taxon>Gammaproteobacteria</taxon>
        <taxon>Enterobacterales</taxon>
        <taxon>Enterobacteriaceae</taxon>
        <taxon>Salmonella</taxon>
    </lineage>
</organism>
<sequence>MRSKRFEALAKRPVNQDGFVKEWIEEGFIAMESPNDPKPSIKIVNGAVTELDGKPVSEFDLIDHFIARYGINLNRAEEVMAMDSVKLANMLCDPNVKRSEIVPLTTAMTPAKIVEVVSHMNVVEMMMAMQKMRARRTPSQQAHVTNVKDNPVQIAADAAEGAWRGFDEQETTVAVARYAPFNAIALLVGSQVGRPGVLTQCSLEEATELKLGMLGHTCYAETISVYGTEPVFTDGDDTPWSKGFLASSYASRGLKMRFTSGSGSEVQMGYAEGKSMLYLEARCIYITKAAGVQGLQNGSVSCIGVPSAVPSGIRAVLAENLICSSLDLECASSNDQTFTHSDMRRTARLLMQFLPGTDFISSGYSAVPNYDNMFAGSNEDAEDFDDYNVIQRDLKVDGGLRPVREEDVIAIRNKAARALQAVFAGMGLPPITDEEVEAATYAHGSKDMPERNIVEDIKFAQEIINKNRNGLEVVKALAQGGFTDVAQDMLNIQKAKLTGDYLHTSAIIVGDGQVLSAVNDVNDYAGPATGYRLQGERWEEIKNIPGALDPNEID</sequence>
<proteinExistence type="evidence at protein level"/>
<accession>P37450</accession>
<reference key="1">
    <citation type="journal article" date="1997" name="J. Bacteriol.">
        <title>Propanediol utilization genes (pdu) of Salmonella typhimurium: three genes for the propanediol dehydratase.</title>
        <authorList>
            <person name="Bobik T.A."/>
            <person name="Xu Y."/>
            <person name="Jeter R.M."/>
            <person name="Otto K.E."/>
            <person name="Roth J.R."/>
        </authorList>
    </citation>
    <scope>NUCLEOTIDE SEQUENCE [GENOMIC DNA]</scope>
    <scope>FUNCTION</scope>
    <scope>CATALYTIC ACTIVITY</scope>
    <scope>SUBUNIT</scope>
    <source>
        <strain>LT2</strain>
    </source>
</reference>
<reference key="2">
    <citation type="journal article" date="1999" name="J. Bacteriol.">
        <title>The propanediol utilization (pdu) operon of Salmonella enterica serovar typhimurium LT2 includes genes necessary for formation of polyhedral organelles involved in coenzyme B(12)-dependent 1, 2-propanediol degradation.</title>
        <authorList>
            <person name="Bobik T.A."/>
            <person name="Havemann G.D."/>
            <person name="Busch R.J."/>
            <person name="Williams D.S."/>
            <person name="Aldrich H.C."/>
        </authorList>
    </citation>
    <scope>NUCLEOTIDE SEQUENCE [GENOMIC DNA]</scope>
    <scope>PATHWAY</scope>
    <scope>SUBCELLULAR LOCATION</scope>
    <scope>INDUCTION</scope>
    <source>
        <strain>LT2</strain>
    </source>
</reference>
<reference key="3">
    <citation type="journal article" date="2001" name="Nature">
        <title>Complete genome sequence of Salmonella enterica serovar Typhimurium LT2.</title>
        <authorList>
            <person name="McClelland M."/>
            <person name="Sanderson K.E."/>
            <person name="Spieth J."/>
            <person name="Clifton S.W."/>
            <person name="Latreille P."/>
            <person name="Courtney L."/>
            <person name="Porwollik S."/>
            <person name="Ali J."/>
            <person name="Dante M."/>
            <person name="Du F."/>
            <person name="Hou S."/>
            <person name="Layman D."/>
            <person name="Leonard S."/>
            <person name="Nguyen C."/>
            <person name="Scott K."/>
            <person name="Holmes A."/>
            <person name="Grewal N."/>
            <person name="Mulvaney E."/>
            <person name="Ryan E."/>
            <person name="Sun H."/>
            <person name="Florea L."/>
            <person name="Miller W."/>
            <person name="Stoneking T."/>
            <person name="Nhan M."/>
            <person name="Waterston R."/>
            <person name="Wilson R.K."/>
        </authorList>
    </citation>
    <scope>NUCLEOTIDE SEQUENCE [LARGE SCALE GENOMIC DNA]</scope>
    <source>
        <strain>LT2 / SGSC1412 / ATCC 700720</strain>
    </source>
</reference>
<reference key="4">
    <citation type="journal article" date="1994" name="J. Bacteriol.">
        <title>The control region of the pdu/cob regulon in Salmonella typhimurium.</title>
        <authorList>
            <person name="Chen P."/>
            <person name="Anderson D.I."/>
            <person name="Roth J.R."/>
        </authorList>
    </citation>
    <scope>NUCLEOTIDE SEQUENCE [GENOMIC DNA] OF 1-59</scope>
    <source>
        <strain>LT2</strain>
    </source>
</reference>
<reference key="5">
    <citation type="journal article" date="2003" name="J. Bacteriol.">
        <title>Protein content of polyhedral organelles involved in coenzyme B12-dependent degradation of 1,2-propanediol in Salmonella enterica serovar Typhimurium LT2.</title>
        <authorList>
            <person name="Havemann G.D."/>
            <person name="Bobik T.A."/>
        </authorList>
    </citation>
    <scope>PROTEIN SEQUENCE OF 1-7</scope>
    <scope>SUBCELLULAR LOCATION</scope>
    <source>
        <strain>LT2</strain>
    </source>
</reference>
<reference key="6">
    <citation type="journal article" date="2002" name="J. Bacteriol.">
        <title>PduA is a shell protein of polyhedral organelles involved in coenzyme B(12)-dependent degradation of 1,2-propanediol in Salmonella enterica serovar typhimurium LT2.</title>
        <authorList>
            <person name="Havemann G.D."/>
            <person name="Sampson E.M."/>
            <person name="Bobik T.A."/>
        </authorList>
    </citation>
    <scope>SUBCELLULAR LOCATION</scope>
    <source>
        <strain>LT2</strain>
    </source>
</reference>
<reference key="7">
    <citation type="journal article" date="1990" name="J. Gen. Microbiol.">
        <title>Cobalamin-dependent 1,2-propanediol utilization by Salmonella typhimurium.</title>
        <authorList>
            <person name="Jeter R.M."/>
        </authorList>
    </citation>
    <scope>COFACTOR</scope>
</reference>
<reference key="8">
    <citation type="journal article" date="1992" name="J. Bacteriol.">
        <title>A single regulatory gene integrates control of vitamin B12 synthesis and propanediol degradation.</title>
        <authorList>
            <person name="Bobik T.A."/>
            <person name="Ailion M."/>
            <person name="Roth J.R."/>
        </authorList>
    </citation>
    <scope>INDUCTION</scope>
</reference>
<reference key="9">
    <citation type="journal article" date="1997" name="J. Bacteriol.">
        <title>Genetic characterization of the pdu operon: use of 1,2-propanediol in Salmonella typhimurium.</title>
        <authorList>
            <person name="Walter D."/>
            <person name="Ailion M."/>
            <person name="Roth J."/>
        </authorList>
    </citation>
    <scope>DISRUPTION PHENOTYPE</scope>
    <scope>FUNCTION IN PROPANEDIOL UTILIZATION</scope>
    <source>
        <strain>LT2</strain>
    </source>
</reference>
<reference key="10">
    <citation type="journal article" date="2006" name="J. Bacteriol.">
        <title>Conserving a volatile metabolite: a role for carboxysome-like organelles in Salmonella enterica.</title>
        <authorList>
            <person name="Penrod J.T."/>
            <person name="Roth J.R."/>
        </authorList>
    </citation>
    <scope>DISRUPTION PHENOTYPE</scope>
    <source>
        <strain>LT2</strain>
    </source>
</reference>
<reference key="11">
    <citation type="journal article" date="2011" name="J. Bacteriol.">
        <title>The N-terminal region of the medium subunit (PduD) packages adenosylcobalamin-dependent diol dehydratase (PduCDE) into the Pdu microcompartment.</title>
        <authorList>
            <person name="Fan C."/>
            <person name="Bobik T.A."/>
        </authorList>
    </citation>
    <scope>SUBCELLULAR LOCATION</scope>
    <source>
        <strain>LT2</strain>
    </source>
</reference>
<reference key="12">
    <citation type="journal article" date="2016" name="Sci. Rep.">
        <title>Engineering formation of multiple recombinant Eut protein nanocompartments in E. coli.</title>
        <authorList>
            <person name="Held M."/>
            <person name="Kolb A."/>
            <person name="Perdue S."/>
            <person name="Hsu S.Y."/>
            <person name="Bloch S.E."/>
            <person name="Quin M.B."/>
            <person name="Schmidt-Dannert C."/>
        </authorList>
    </citation>
    <scope>SUBCELLULAR LOCATION</scope>
    <source>
        <strain>LT2</strain>
    </source>
</reference>
<reference key="13">
    <citation type="journal article" date="2015" name="Proc. Natl. Acad. Sci. U.S.A.">
        <title>Selective molecular transport through the protein shell of a bacterial microcompartment organelle.</title>
        <authorList>
            <person name="Chowdhury C."/>
            <person name="Chun S."/>
            <person name="Pang A."/>
            <person name="Sawaya M.R."/>
            <person name="Sinha S."/>
            <person name="Yeates T.O."/>
            <person name="Bobik T.A."/>
        </authorList>
    </citation>
    <scope>ACTIVITY REGULATION</scope>
    <source>
        <strain>LT2</strain>
    </source>
</reference>
<reference key="14">
    <citation type="journal article" date="2017" name="PLoS Comput. Biol.">
        <title>A systems-level model reveals that 1,2-Propanediol utilization microcompartments enhance pathway flux through intermediate sequestration.</title>
        <authorList>
            <person name="Jakobson C.M."/>
            <person name="Tullman-Ercek D."/>
            <person name="Slininger M.F."/>
            <person name="Mangan N.M."/>
        </authorList>
    </citation>
    <scope>SYSTEM-MODELING</scope>
    <scope>FUNCTION</scope>
    <source>
        <strain>LT2</strain>
    </source>
</reference>
<feature type="chain" id="PRO_0000079885" description="Propanediol dehydratase large subunit">
    <location>
        <begin position="1"/>
        <end position="554"/>
    </location>
</feature>
<feature type="sequence conflict" description="In Ref. 1; AAB84102." evidence="14" ref="1">
    <original>C</original>
    <variation>S</variation>
    <location>
        <position position="302"/>
    </location>
</feature>
<comment type="function">
    <text evidence="1 11 17">Part of the PduCDE complex that catalyzes the dehydration of 1,2-propanediol (1,2-PD) to propionaldehyde. Required for S.typhimurium growth on 1,2-PD as the sole carbon and energy source (Probable) (PubMed:9023178). This subunit is directly targeted to the BMC (By similarity).</text>
</comment>
<comment type="function">
    <text evidence="9 16">The 1,2-PD-specific bacterial microcompartment (BMC) concentrates low levels of 1,2-PD catabolic enzymes, concentrates volatile reaction intermediates thus enhancing pathway flux and keeps the level of toxic, mutagenic propionaldehyde low.</text>
</comment>
<comment type="catalytic activity">
    <reaction evidence="12">
        <text>propane-1,2-diol = propanal + H2O</text>
        <dbReference type="Rhea" id="RHEA:14569"/>
        <dbReference type="ChEBI" id="CHEBI:15377"/>
        <dbReference type="ChEBI" id="CHEBI:16997"/>
        <dbReference type="ChEBI" id="CHEBI:17153"/>
        <dbReference type="EC" id="4.2.1.28"/>
    </reaction>
</comment>
<comment type="cofactor">
    <cofactor evidence="7">
        <name>adenosylcob(III)alamin</name>
        <dbReference type="ChEBI" id="CHEBI:18408"/>
    </cofactor>
</comment>
<comment type="activity regulation">
    <text evidence="9">Inhibited by glycerol.</text>
</comment>
<comment type="pathway">
    <text evidence="15">Polyol metabolism; 1,2-propanediol degradation.</text>
</comment>
<comment type="subunit">
    <text evidence="12">The propanediol dehydratase enzyme is a heterotrimeric complex composed of a large (PduC), a medium (PduD) and a small (PduE) subunit.</text>
</comment>
<comment type="subcellular location">
    <subcellularLocation>
        <location evidence="2 3 4 8 10">Bacterial microcompartment</location>
    </subcellularLocation>
    <text evidence="15">Probably located inside the BMC shell.</text>
</comment>
<comment type="induction">
    <text evidence="2 5">BMC production is induced by growth on 1,2-PD vitamin B12 medium (PubMed:10498708). By either propanediol or glycerol (PubMed:1312999).</text>
</comment>
<comment type="disruption phenotype">
    <text evidence="6 11">Cells lacking this gene are defective in aerobic degradation of propanediol and display no propanediol dehydratase activity (PubMed:9023178). A triple pduC-pduD-pduE deletion releases no acetaldehyde when grown on propanediol (PubMed:16585748).</text>
</comment>
<comment type="miscellaneous">
    <text evidence="2 4">Bacterial microcompartments (BMC) 100-200 nm in cross section are formed during aerobic growth on minimal 1,2-PD-B12 or anaerobic growth on 1,2-PD-tetrathionate medium, but not during aerobic growth on glucose, anerobic growth on glucose or pyruvate-tetrathionate (PubMed:10498708). BMCs can constitute up to 10% of total cell protein (PubMed:12923081).</text>
</comment>
<comment type="similarity">
    <text evidence="14">Belongs to the diol/glycerol dehydratase large subunit family.</text>
</comment>
<protein>
    <recommendedName>
        <fullName>Propanediol dehydratase large subunit</fullName>
        <ecNumber evidence="12">4.2.1.28</ecNumber>
    </recommendedName>
    <alternativeName>
        <fullName>Diol dehydratase large subunit</fullName>
        <shortName>DDH large subunit</shortName>
    </alternativeName>
    <alternativeName>
        <fullName>Propanediol utilization protein PduC</fullName>
    </alternativeName>
</protein>
<gene>
    <name evidence="13" type="primary">pduC</name>
    <name type="ordered locus">STM2040</name>
</gene>